<accession>Q8G2M8</accession>
<accession>G0K646</accession>
<keyword id="KW-0238">DNA-binding</keyword>
<keyword id="KW-0678">Repressor</keyword>
<keyword id="KW-0804">Transcription</keyword>
<keyword id="KW-0805">Transcription regulation</keyword>
<protein>
    <recommendedName>
        <fullName>HTH-type transcriptional repressor BepR</fullName>
    </recommendedName>
</protein>
<sequence>MRRTKAEAAETREAILLAAEQVFLERGVNQSTLTEIACYAGVTRGAIYFHFEDKLDIFQSIIGRARFPQEEIMLQAARFDHPNPLHILEQSIVAALELFATDERQQVVFTIINQRCEYVGEMAPVIDRLKEMRSDVLALFIGLLKVAERRGELASEWSAETAAQILLAMVGGFLNEWLHGEKGFDLIIHGSRVISTVIQSLRAPANIPQ</sequence>
<dbReference type="EMBL" id="AE014291">
    <property type="protein sequence ID" value="AAN29239.1"/>
    <property type="molecule type" value="Genomic_DNA"/>
</dbReference>
<dbReference type="EMBL" id="CP002997">
    <property type="protein sequence ID" value="AEM17652.1"/>
    <property type="molecule type" value="Genomic_DNA"/>
</dbReference>
<dbReference type="RefSeq" id="WP_004687968.1">
    <property type="nucleotide sequence ID" value="NZ_KN046804.1"/>
</dbReference>
<dbReference type="SMR" id="Q8G2M8"/>
<dbReference type="KEGG" id="bms:BR0290"/>
<dbReference type="KEGG" id="bsi:BS1330_I0291"/>
<dbReference type="PATRIC" id="fig|204722.21.peg.1776"/>
<dbReference type="HOGENOM" id="CLU_069356_12_3_5"/>
<dbReference type="PhylomeDB" id="Q8G2M8"/>
<dbReference type="Proteomes" id="UP000007104">
    <property type="component" value="Chromosome I"/>
</dbReference>
<dbReference type="GO" id="GO:0003700">
    <property type="term" value="F:DNA-binding transcription factor activity"/>
    <property type="evidence" value="ECO:0007669"/>
    <property type="project" value="TreeGrafter"/>
</dbReference>
<dbReference type="GO" id="GO:0000976">
    <property type="term" value="F:transcription cis-regulatory region binding"/>
    <property type="evidence" value="ECO:0007669"/>
    <property type="project" value="TreeGrafter"/>
</dbReference>
<dbReference type="Gene3D" id="1.10.357.10">
    <property type="entry name" value="Tetracycline Repressor, domain 2"/>
    <property type="match status" value="1"/>
</dbReference>
<dbReference type="InterPro" id="IPR023772">
    <property type="entry name" value="DNA-bd_HTH_TetR-type_CS"/>
</dbReference>
<dbReference type="InterPro" id="IPR009057">
    <property type="entry name" value="Homeodomain-like_sf"/>
</dbReference>
<dbReference type="InterPro" id="IPR050109">
    <property type="entry name" value="HTH-type_TetR-like_transc_reg"/>
</dbReference>
<dbReference type="InterPro" id="IPR001647">
    <property type="entry name" value="HTH_TetR"/>
</dbReference>
<dbReference type="InterPro" id="IPR036271">
    <property type="entry name" value="Tet_transcr_reg_TetR-rel_C_sf"/>
</dbReference>
<dbReference type="InterPro" id="IPR013572">
    <property type="entry name" value="Tscrpt_reg_MAATS_C"/>
</dbReference>
<dbReference type="PANTHER" id="PTHR30055:SF240">
    <property type="entry name" value="HTH-TYPE TRANSCRIPTIONAL REGULATOR ACRR"/>
    <property type="match status" value="1"/>
</dbReference>
<dbReference type="PANTHER" id="PTHR30055">
    <property type="entry name" value="HTH-TYPE TRANSCRIPTIONAL REGULATOR RUTR"/>
    <property type="match status" value="1"/>
</dbReference>
<dbReference type="Pfam" id="PF08361">
    <property type="entry name" value="TetR_C_2"/>
    <property type="match status" value="1"/>
</dbReference>
<dbReference type="Pfam" id="PF00440">
    <property type="entry name" value="TetR_N"/>
    <property type="match status" value="1"/>
</dbReference>
<dbReference type="PRINTS" id="PR00455">
    <property type="entry name" value="HTHTETR"/>
</dbReference>
<dbReference type="SUPFAM" id="SSF46689">
    <property type="entry name" value="Homeodomain-like"/>
    <property type="match status" value="1"/>
</dbReference>
<dbReference type="SUPFAM" id="SSF48498">
    <property type="entry name" value="Tetracyclin repressor-like, C-terminal domain"/>
    <property type="match status" value="1"/>
</dbReference>
<dbReference type="PROSITE" id="PS01081">
    <property type="entry name" value="HTH_TETR_1"/>
    <property type="match status" value="1"/>
</dbReference>
<dbReference type="PROSITE" id="PS50977">
    <property type="entry name" value="HTH_TETR_2"/>
    <property type="match status" value="1"/>
</dbReference>
<feature type="chain" id="PRO_0000390652" description="HTH-type transcriptional repressor BepR">
    <location>
        <begin position="1"/>
        <end position="209"/>
    </location>
</feature>
<feature type="domain" description="HTH tetR-type" evidence="1">
    <location>
        <begin position="9"/>
        <end position="69"/>
    </location>
</feature>
<feature type="DNA-binding region" description="H-T-H motif" evidence="1">
    <location>
        <begin position="32"/>
        <end position="51"/>
    </location>
</feature>
<gene>
    <name type="primary">bepR</name>
    <name type="ordered locus">BR0290</name>
    <name type="ordered locus">BS1330_I0291</name>
</gene>
<name>BEPR_BRUSU</name>
<organism>
    <name type="scientific">Brucella suis biovar 1 (strain 1330)</name>
    <dbReference type="NCBI Taxonomy" id="204722"/>
    <lineage>
        <taxon>Bacteria</taxon>
        <taxon>Pseudomonadati</taxon>
        <taxon>Pseudomonadota</taxon>
        <taxon>Alphaproteobacteria</taxon>
        <taxon>Hyphomicrobiales</taxon>
        <taxon>Brucellaceae</taxon>
        <taxon>Brucella/Ochrobactrum group</taxon>
        <taxon>Brucella</taxon>
    </lineage>
</organism>
<reference key="1">
    <citation type="journal article" date="2002" name="Proc. Natl. Acad. Sci. U.S.A.">
        <title>The Brucella suis genome reveals fundamental similarities between animal and plant pathogens and symbionts.</title>
        <authorList>
            <person name="Paulsen I.T."/>
            <person name="Seshadri R."/>
            <person name="Nelson K.E."/>
            <person name="Eisen J.A."/>
            <person name="Heidelberg J.F."/>
            <person name="Read T.D."/>
            <person name="Dodson R.J."/>
            <person name="Umayam L.A."/>
            <person name="Brinkac L.M."/>
            <person name="Beanan M.J."/>
            <person name="Daugherty S.C."/>
            <person name="DeBoy R.T."/>
            <person name="Durkin A.S."/>
            <person name="Kolonay J.F."/>
            <person name="Madupu R."/>
            <person name="Nelson W.C."/>
            <person name="Ayodeji B."/>
            <person name="Kraul M."/>
            <person name="Shetty J."/>
            <person name="Malek J.A."/>
            <person name="Van Aken S.E."/>
            <person name="Riedmuller S."/>
            <person name="Tettelin H."/>
            <person name="Gill S.R."/>
            <person name="White O."/>
            <person name="Salzberg S.L."/>
            <person name="Hoover D.L."/>
            <person name="Lindler L.E."/>
            <person name="Halling S.M."/>
            <person name="Boyle S.M."/>
            <person name="Fraser C.M."/>
        </authorList>
    </citation>
    <scope>NUCLEOTIDE SEQUENCE [LARGE SCALE GENOMIC DNA]</scope>
    <source>
        <strain>1330</strain>
    </source>
</reference>
<reference key="2">
    <citation type="journal article" date="2011" name="J. Bacteriol.">
        <title>Revised genome sequence of Brucella suis 1330.</title>
        <authorList>
            <person name="Tae H."/>
            <person name="Shallom S."/>
            <person name="Settlage R."/>
            <person name="Preston D."/>
            <person name="Adams L.G."/>
            <person name="Garner H.R."/>
        </authorList>
    </citation>
    <scope>NUCLEOTIDE SEQUENCE [LARGE SCALE GENOMIC DNA]</scope>
    <source>
        <strain>1330</strain>
    </source>
</reference>
<reference key="3">
    <citation type="journal article" date="2009" name="J. Bacteriol.">
        <title>Interplay between two RND systems mediating antimicrobial resistance in Brucella suis.</title>
        <authorList>
            <person name="Martin F.A."/>
            <person name="Posadas D.M."/>
            <person name="Carrica M.C."/>
            <person name="Cravero S.L."/>
            <person name="O'Callaghan D."/>
            <person name="Zorreguieta A."/>
        </authorList>
    </citation>
    <scope>FUNCTION AS A REPRESSOR</scope>
    <source>
        <strain>1330</strain>
    </source>
</reference>
<proteinExistence type="evidence at protein level"/>
<comment type="function">
    <text evidence="2">Represses expression of bepDE.</text>
</comment>
<evidence type="ECO:0000255" key="1">
    <source>
        <dbReference type="PROSITE-ProRule" id="PRU00335"/>
    </source>
</evidence>
<evidence type="ECO:0000269" key="2">
    <source>
    </source>
</evidence>